<comment type="function">
    <text evidence="1">DNA-dependent RNA polymerase catalyzes the transcription of DNA into RNA using the four ribonucleoside triphosphates as substrates.</text>
</comment>
<comment type="catalytic activity">
    <reaction evidence="1">
        <text>RNA(n) + a ribonucleoside 5'-triphosphate = RNA(n+1) + diphosphate</text>
        <dbReference type="Rhea" id="RHEA:21248"/>
        <dbReference type="Rhea" id="RHEA-COMP:14527"/>
        <dbReference type="Rhea" id="RHEA-COMP:17342"/>
        <dbReference type="ChEBI" id="CHEBI:33019"/>
        <dbReference type="ChEBI" id="CHEBI:61557"/>
        <dbReference type="ChEBI" id="CHEBI:140395"/>
        <dbReference type="EC" id="2.7.7.6"/>
    </reaction>
</comment>
<comment type="subunit">
    <text evidence="1">In plastids the minimal PEP RNA polymerase catalytic core is composed of four subunits: alpha, beta, beta', and beta''. When a (nuclear-encoded) sigma factor is associated with the core the holoenzyme is formed, which can initiate transcription.</text>
</comment>
<comment type="subcellular location">
    <subcellularLocation>
        <location>Plastid</location>
        <location>Chloroplast</location>
    </subcellularLocation>
</comment>
<comment type="domain">
    <text evidence="1">The N-terminal domain is essential for RNAP assembly and basal transcription, whereas the C-terminal domain is involved in interaction with transcriptional regulators and with upstream promoter elements.</text>
</comment>
<comment type="similarity">
    <text evidence="1">Belongs to the RNA polymerase alpha chain family.</text>
</comment>
<dbReference type="EC" id="2.7.7.6" evidence="1"/>
<dbReference type="EMBL" id="Z77759">
    <property type="protein sequence ID" value="CAB01354.1"/>
    <property type="molecule type" value="Genomic_DNA"/>
</dbReference>
<dbReference type="RefSeq" id="YP_010507089.1">
    <property type="nucleotide sequence ID" value="NC_067047.1"/>
</dbReference>
<dbReference type="SMR" id="P92220"/>
<dbReference type="GeneID" id="75513475"/>
<dbReference type="GO" id="GO:0009507">
    <property type="term" value="C:chloroplast"/>
    <property type="evidence" value="ECO:0007669"/>
    <property type="project" value="UniProtKB-SubCell"/>
</dbReference>
<dbReference type="GO" id="GO:0000428">
    <property type="term" value="C:DNA-directed RNA polymerase complex"/>
    <property type="evidence" value="ECO:0007669"/>
    <property type="project" value="UniProtKB-KW"/>
</dbReference>
<dbReference type="GO" id="GO:0005739">
    <property type="term" value="C:mitochondrion"/>
    <property type="evidence" value="ECO:0007669"/>
    <property type="project" value="GOC"/>
</dbReference>
<dbReference type="GO" id="GO:0003677">
    <property type="term" value="F:DNA binding"/>
    <property type="evidence" value="ECO:0007669"/>
    <property type="project" value="UniProtKB-UniRule"/>
</dbReference>
<dbReference type="GO" id="GO:0003899">
    <property type="term" value="F:DNA-directed RNA polymerase activity"/>
    <property type="evidence" value="ECO:0007669"/>
    <property type="project" value="UniProtKB-UniRule"/>
</dbReference>
<dbReference type="GO" id="GO:0046983">
    <property type="term" value="F:protein dimerization activity"/>
    <property type="evidence" value="ECO:0007669"/>
    <property type="project" value="InterPro"/>
</dbReference>
<dbReference type="GO" id="GO:0006351">
    <property type="term" value="P:DNA-templated transcription"/>
    <property type="evidence" value="ECO:0007669"/>
    <property type="project" value="UniProtKB-UniRule"/>
</dbReference>
<dbReference type="CDD" id="cd06928">
    <property type="entry name" value="RNAP_alpha_NTD"/>
    <property type="match status" value="1"/>
</dbReference>
<dbReference type="FunFam" id="1.10.150.20:FF:000021">
    <property type="entry name" value="DNA-directed RNA polymerase subunit alpha"/>
    <property type="match status" value="1"/>
</dbReference>
<dbReference type="FunFam" id="2.170.120.12:FF:000001">
    <property type="entry name" value="DNA-directed RNA polymerase subunit alpha"/>
    <property type="match status" value="1"/>
</dbReference>
<dbReference type="Gene3D" id="1.10.150.20">
    <property type="entry name" value="5' to 3' exonuclease, C-terminal subdomain"/>
    <property type="match status" value="1"/>
</dbReference>
<dbReference type="Gene3D" id="2.170.120.12">
    <property type="entry name" value="DNA-directed RNA polymerase, insert domain"/>
    <property type="match status" value="1"/>
</dbReference>
<dbReference type="Gene3D" id="3.30.1360.10">
    <property type="entry name" value="RNA polymerase, RBP11-like subunit"/>
    <property type="match status" value="1"/>
</dbReference>
<dbReference type="HAMAP" id="MF_00059">
    <property type="entry name" value="RNApol_bact_RpoA"/>
    <property type="match status" value="1"/>
</dbReference>
<dbReference type="InterPro" id="IPR011262">
    <property type="entry name" value="DNA-dir_RNA_pol_insert"/>
</dbReference>
<dbReference type="InterPro" id="IPR011263">
    <property type="entry name" value="DNA-dir_RNA_pol_RpoA/D/Rpb3"/>
</dbReference>
<dbReference type="InterPro" id="IPR011773">
    <property type="entry name" value="DNA-dir_RpoA"/>
</dbReference>
<dbReference type="InterPro" id="IPR036603">
    <property type="entry name" value="RBP11-like"/>
</dbReference>
<dbReference type="InterPro" id="IPR011260">
    <property type="entry name" value="RNAP_asu_C"/>
</dbReference>
<dbReference type="InterPro" id="IPR036643">
    <property type="entry name" value="RNApol_insert_sf"/>
</dbReference>
<dbReference type="NCBIfam" id="TIGR02027">
    <property type="entry name" value="rpoA"/>
    <property type="match status" value="1"/>
</dbReference>
<dbReference type="Pfam" id="PF01000">
    <property type="entry name" value="RNA_pol_A_bac"/>
    <property type="match status" value="1"/>
</dbReference>
<dbReference type="Pfam" id="PF03118">
    <property type="entry name" value="RNA_pol_A_CTD"/>
    <property type="match status" value="1"/>
</dbReference>
<dbReference type="Pfam" id="PF01193">
    <property type="entry name" value="RNA_pol_L"/>
    <property type="match status" value="1"/>
</dbReference>
<dbReference type="SMART" id="SM00662">
    <property type="entry name" value="RPOLD"/>
    <property type="match status" value="1"/>
</dbReference>
<dbReference type="SUPFAM" id="SSF47789">
    <property type="entry name" value="C-terminal domain of RNA polymerase alpha subunit"/>
    <property type="match status" value="1"/>
</dbReference>
<dbReference type="SUPFAM" id="SSF56553">
    <property type="entry name" value="Insert subdomain of RNA polymerase alpha subunit"/>
    <property type="match status" value="1"/>
</dbReference>
<dbReference type="SUPFAM" id="SSF55257">
    <property type="entry name" value="RBP11-like subunits of RNA polymerase"/>
    <property type="match status" value="1"/>
</dbReference>
<gene>
    <name evidence="1" type="primary">rpoA</name>
</gene>
<sequence>MVREEVAGSTQTLQWKCVESRVDSKRLYYGRFILSPLRKGQADTVGIALRRALLGEIEGTCIARAKFGSVPHEYSTIAGIEESVQEILLNLKEIVLRSNLYGVRDASICVKGPRYITAQDIILPPSVEIVDTAQPIANLTEPIDFCIDLQIKRDRGYQTELRKNYQDGSYPIDAVSMPVRNVNYSIFSCGNGNEKHEILFLEIWTNGSLTPKEALYEASRNLIDLFLPFLHAEEEGTSFEENKNRFTPPLFTFKKRLTNLKKNKKGIPLNCIFIDQLELTSRTYNCLKRANIHTLLDLLSKTEEDLMRIDSFRMEDRKHIWDTLEKHLPIDLLKNKLSF</sequence>
<protein>
    <recommendedName>
        <fullName evidence="1">DNA-directed RNA polymerase subunit alpha</fullName>
        <shortName evidence="1">PEP</shortName>
        <ecNumber evidence="1">2.7.7.6</ecNumber>
    </recommendedName>
    <alternativeName>
        <fullName evidence="1">Plastid-encoded RNA polymerase subunit alpha</fullName>
        <shortName evidence="1">RNA polymerase subunit alpha</shortName>
    </alternativeName>
</protein>
<accession>P92220</accession>
<keyword id="KW-0150">Chloroplast</keyword>
<keyword id="KW-0240">DNA-directed RNA polymerase</keyword>
<keyword id="KW-0548">Nucleotidyltransferase</keyword>
<keyword id="KW-0934">Plastid</keyword>
<keyword id="KW-0804">Transcription</keyword>
<keyword id="KW-0808">Transferase</keyword>
<proteinExistence type="inferred from homology"/>
<feature type="chain" id="PRO_0000175443" description="DNA-directed RNA polymerase subunit alpha">
    <location>
        <begin position="1"/>
        <end position="339"/>
    </location>
</feature>
<feature type="region of interest" description="Alpha N-terminal domain (alpha-NTD)" evidence="1">
    <location>
        <begin position="1"/>
        <end position="233"/>
    </location>
</feature>
<feature type="region of interest" description="Alpha C-terminal domain (alpha-CTD)" evidence="1">
    <location>
        <begin position="264"/>
        <end position="339"/>
    </location>
</feature>
<organism>
    <name type="scientific">Bromus inermis</name>
    <name type="common">Smooth brome grass</name>
    <name type="synonym">Bromopsis inermis</name>
    <dbReference type="NCBI Taxonomy" id="15371"/>
    <lineage>
        <taxon>Eukaryota</taxon>
        <taxon>Viridiplantae</taxon>
        <taxon>Streptophyta</taxon>
        <taxon>Embryophyta</taxon>
        <taxon>Tracheophyta</taxon>
        <taxon>Spermatophyta</taxon>
        <taxon>Magnoliopsida</taxon>
        <taxon>Liliopsida</taxon>
        <taxon>Poales</taxon>
        <taxon>Poaceae</taxon>
        <taxon>BOP clade</taxon>
        <taxon>Pooideae</taxon>
        <taxon>Triticodae</taxon>
        <taxon>Bromeae</taxon>
        <taxon>Bromus</taxon>
    </lineage>
</organism>
<reference key="1">
    <citation type="journal article" date="1997" name="Mol. Phylogenet. Evol.">
        <title>Phylogenetic analysis of the Triticeae (Poaceae) based on rpoA sequence data.</title>
        <authorList>
            <person name="Petersen G."/>
            <person name="Seberg O."/>
        </authorList>
    </citation>
    <scope>NUCLEOTIDE SEQUENCE [GENOMIC DNA]</scope>
    <source>
        <strain>OSA414</strain>
        <tissue>Leaf</tissue>
    </source>
</reference>
<name>RPOA_BROIN</name>
<geneLocation type="chloroplast"/>
<evidence type="ECO:0000255" key="1">
    <source>
        <dbReference type="HAMAP-Rule" id="MF_00059"/>
    </source>
</evidence>